<gene>
    <name evidence="1" type="primary">hslV</name>
    <name type="ordered locus">Veis_4559</name>
</gene>
<dbReference type="EC" id="3.4.25.2" evidence="1"/>
<dbReference type="EMBL" id="CP000542">
    <property type="protein sequence ID" value="ABM60257.1"/>
    <property type="molecule type" value="Genomic_DNA"/>
</dbReference>
<dbReference type="SMR" id="A1WRK0"/>
<dbReference type="STRING" id="391735.Veis_4559"/>
<dbReference type="MEROPS" id="T01.007"/>
<dbReference type="KEGG" id="vei:Veis_4559"/>
<dbReference type="eggNOG" id="COG5405">
    <property type="taxonomic scope" value="Bacteria"/>
</dbReference>
<dbReference type="HOGENOM" id="CLU_093872_1_0_4"/>
<dbReference type="Proteomes" id="UP000000374">
    <property type="component" value="Chromosome"/>
</dbReference>
<dbReference type="GO" id="GO:0009376">
    <property type="term" value="C:HslUV protease complex"/>
    <property type="evidence" value="ECO:0007669"/>
    <property type="project" value="UniProtKB-UniRule"/>
</dbReference>
<dbReference type="GO" id="GO:0005839">
    <property type="term" value="C:proteasome core complex"/>
    <property type="evidence" value="ECO:0007669"/>
    <property type="project" value="InterPro"/>
</dbReference>
<dbReference type="GO" id="GO:0046872">
    <property type="term" value="F:metal ion binding"/>
    <property type="evidence" value="ECO:0007669"/>
    <property type="project" value="UniProtKB-KW"/>
</dbReference>
<dbReference type="GO" id="GO:0004298">
    <property type="term" value="F:threonine-type endopeptidase activity"/>
    <property type="evidence" value="ECO:0007669"/>
    <property type="project" value="UniProtKB-KW"/>
</dbReference>
<dbReference type="GO" id="GO:0051603">
    <property type="term" value="P:proteolysis involved in protein catabolic process"/>
    <property type="evidence" value="ECO:0007669"/>
    <property type="project" value="InterPro"/>
</dbReference>
<dbReference type="CDD" id="cd01913">
    <property type="entry name" value="protease_HslV"/>
    <property type="match status" value="1"/>
</dbReference>
<dbReference type="FunFam" id="3.60.20.10:FF:000002">
    <property type="entry name" value="ATP-dependent protease subunit HslV"/>
    <property type="match status" value="1"/>
</dbReference>
<dbReference type="Gene3D" id="3.60.20.10">
    <property type="entry name" value="Glutamine Phosphoribosylpyrophosphate, subunit 1, domain 1"/>
    <property type="match status" value="1"/>
</dbReference>
<dbReference type="HAMAP" id="MF_00248">
    <property type="entry name" value="HslV"/>
    <property type="match status" value="1"/>
</dbReference>
<dbReference type="InterPro" id="IPR022281">
    <property type="entry name" value="ATP-dep_Prtase_HsIV_su"/>
</dbReference>
<dbReference type="InterPro" id="IPR029055">
    <property type="entry name" value="Ntn_hydrolases_N"/>
</dbReference>
<dbReference type="InterPro" id="IPR001353">
    <property type="entry name" value="Proteasome_sua/b"/>
</dbReference>
<dbReference type="InterPro" id="IPR023333">
    <property type="entry name" value="Proteasome_suB-type"/>
</dbReference>
<dbReference type="NCBIfam" id="TIGR03692">
    <property type="entry name" value="ATP_dep_HslV"/>
    <property type="match status" value="1"/>
</dbReference>
<dbReference type="NCBIfam" id="NF003964">
    <property type="entry name" value="PRK05456.1"/>
    <property type="match status" value="1"/>
</dbReference>
<dbReference type="PANTHER" id="PTHR32194:SF0">
    <property type="entry name" value="ATP-DEPENDENT PROTEASE SUBUNIT HSLV"/>
    <property type="match status" value="1"/>
</dbReference>
<dbReference type="PANTHER" id="PTHR32194">
    <property type="entry name" value="METALLOPROTEASE TLDD"/>
    <property type="match status" value="1"/>
</dbReference>
<dbReference type="Pfam" id="PF00227">
    <property type="entry name" value="Proteasome"/>
    <property type="match status" value="1"/>
</dbReference>
<dbReference type="PIRSF" id="PIRSF039093">
    <property type="entry name" value="HslV"/>
    <property type="match status" value="1"/>
</dbReference>
<dbReference type="SUPFAM" id="SSF56235">
    <property type="entry name" value="N-terminal nucleophile aminohydrolases (Ntn hydrolases)"/>
    <property type="match status" value="1"/>
</dbReference>
<dbReference type="PROSITE" id="PS51476">
    <property type="entry name" value="PROTEASOME_BETA_2"/>
    <property type="match status" value="1"/>
</dbReference>
<reference key="1">
    <citation type="submission" date="2006-12" db="EMBL/GenBank/DDBJ databases">
        <title>Complete sequence of chromosome 1 of Verminephrobacter eiseniae EF01-2.</title>
        <authorList>
            <person name="Copeland A."/>
            <person name="Lucas S."/>
            <person name="Lapidus A."/>
            <person name="Barry K."/>
            <person name="Detter J.C."/>
            <person name="Glavina del Rio T."/>
            <person name="Dalin E."/>
            <person name="Tice H."/>
            <person name="Pitluck S."/>
            <person name="Chertkov O."/>
            <person name="Brettin T."/>
            <person name="Bruce D."/>
            <person name="Han C."/>
            <person name="Tapia R."/>
            <person name="Gilna P."/>
            <person name="Schmutz J."/>
            <person name="Larimer F."/>
            <person name="Land M."/>
            <person name="Hauser L."/>
            <person name="Kyrpides N."/>
            <person name="Kim E."/>
            <person name="Stahl D."/>
            <person name="Richardson P."/>
        </authorList>
    </citation>
    <scope>NUCLEOTIDE SEQUENCE [LARGE SCALE GENOMIC DNA]</scope>
    <source>
        <strain>EF01-2</strain>
    </source>
</reference>
<evidence type="ECO:0000255" key="1">
    <source>
        <dbReference type="HAMAP-Rule" id="MF_00248"/>
    </source>
</evidence>
<organism>
    <name type="scientific">Verminephrobacter eiseniae (strain EF01-2)</name>
    <dbReference type="NCBI Taxonomy" id="391735"/>
    <lineage>
        <taxon>Bacteria</taxon>
        <taxon>Pseudomonadati</taxon>
        <taxon>Pseudomonadota</taxon>
        <taxon>Betaproteobacteria</taxon>
        <taxon>Burkholderiales</taxon>
        <taxon>Comamonadaceae</taxon>
        <taxon>Verminephrobacter</taxon>
    </lineage>
</organism>
<accession>A1WRK0</accession>
<protein>
    <recommendedName>
        <fullName evidence="1">ATP-dependent protease subunit HslV</fullName>
        <ecNumber evidence="1">3.4.25.2</ecNumber>
    </recommendedName>
</protein>
<comment type="function">
    <text evidence="1">Protease subunit of a proteasome-like degradation complex believed to be a general protein degrading machinery.</text>
</comment>
<comment type="catalytic activity">
    <reaction evidence="1">
        <text>ATP-dependent cleavage of peptide bonds with broad specificity.</text>
        <dbReference type="EC" id="3.4.25.2"/>
    </reaction>
</comment>
<comment type="activity regulation">
    <text evidence="1">Allosterically activated by HslU binding.</text>
</comment>
<comment type="subunit">
    <text evidence="1">A double ring-shaped homohexamer of HslV is capped on each side by a ring-shaped HslU homohexamer. The assembly of the HslU/HslV complex is dependent on binding of ATP.</text>
</comment>
<comment type="subcellular location">
    <subcellularLocation>
        <location evidence="1">Cytoplasm</location>
    </subcellularLocation>
</comment>
<comment type="similarity">
    <text evidence="1">Belongs to the peptidase T1B family. HslV subfamily.</text>
</comment>
<proteinExistence type="inferred from homology"/>
<name>HSLV_VEREI</name>
<keyword id="KW-0021">Allosteric enzyme</keyword>
<keyword id="KW-0963">Cytoplasm</keyword>
<keyword id="KW-0378">Hydrolase</keyword>
<keyword id="KW-0479">Metal-binding</keyword>
<keyword id="KW-0645">Protease</keyword>
<keyword id="KW-1185">Reference proteome</keyword>
<keyword id="KW-0915">Sodium</keyword>
<keyword id="KW-0888">Threonine protease</keyword>
<feature type="chain" id="PRO_0000336804" description="ATP-dependent protease subunit HslV">
    <location>
        <begin position="1"/>
        <end position="179"/>
    </location>
</feature>
<feature type="active site" evidence="1">
    <location>
        <position position="5"/>
    </location>
</feature>
<feature type="binding site" evidence="1">
    <location>
        <position position="164"/>
    </location>
    <ligand>
        <name>Na(+)</name>
        <dbReference type="ChEBI" id="CHEBI:29101"/>
    </ligand>
</feature>
<feature type="binding site" evidence="1">
    <location>
        <position position="167"/>
    </location>
    <ligand>
        <name>Na(+)</name>
        <dbReference type="ChEBI" id="CHEBI:29101"/>
    </ligand>
</feature>
<feature type="binding site" evidence="1">
    <location>
        <position position="170"/>
    </location>
    <ligand>
        <name>Na(+)</name>
        <dbReference type="ChEBI" id="CHEBI:29101"/>
    </ligand>
</feature>
<sequence>MFHGTTILSVRRQTPQGVQVAIGGDGQVTLGAIVVKGTARKVRKLHHGKVLAGFAGATADAFTLFERFEAKLDKHQGHLVRSAIELTKDWRTDRVLRRLEAMLAVADQESSLIITGNGDVLEPEQGIIAIGSGGAYANAAAKALLNHTDLSAADIVKQALEIAGELCIYTNMHHTIETL</sequence>